<name>THIS_ECOLI</name>
<keyword id="KW-0002">3D-structure</keyword>
<keyword id="KW-0547">Nucleotide-binding</keyword>
<keyword id="KW-0597">Phosphoprotein</keyword>
<keyword id="KW-1185">Reference proteome</keyword>
<keyword id="KW-0784">Thiamine biosynthesis</keyword>
<keyword id="KW-0882">Thioester bond</keyword>
<feature type="chain" id="PRO_0000072518" description="Sulfur carrier protein ThiS">
    <location>
        <begin position="1"/>
        <end position="66"/>
    </location>
</feature>
<feature type="modified residue" description="1-thioglycine; alternate" evidence="2">
    <location>
        <position position="66"/>
    </location>
</feature>
<feature type="modified residue" description="Glycyl adenylate; alternate" evidence="2">
    <location>
        <position position="66"/>
    </location>
</feature>
<feature type="cross-link" description="Glycyl cysteine dithioester (Gly-Cys) (interchain with C-184 in ThiF); alternate">
    <location>
        <position position="66"/>
    </location>
</feature>
<feature type="strand" evidence="5">
    <location>
        <begin position="3"/>
        <end position="5"/>
    </location>
</feature>
<feature type="strand" evidence="5">
    <location>
        <begin position="8"/>
        <end position="10"/>
    </location>
</feature>
<feature type="helix" evidence="5">
    <location>
        <begin position="18"/>
        <end position="25"/>
    </location>
</feature>
<feature type="strand" evidence="5">
    <location>
        <begin position="32"/>
        <end position="36"/>
    </location>
</feature>
<feature type="strand" evidence="4">
    <location>
        <begin position="39"/>
        <end position="41"/>
    </location>
</feature>
<feature type="helix" evidence="5">
    <location>
        <begin position="43"/>
        <end position="45"/>
    </location>
</feature>
<feature type="turn" evidence="5">
    <location>
        <begin position="46"/>
        <end position="48"/>
    </location>
</feature>
<feature type="strand" evidence="5">
    <location>
        <begin position="56"/>
        <end position="61"/>
    </location>
</feature>
<evidence type="ECO:0000269" key="1">
    <source>
    </source>
</evidence>
<evidence type="ECO:0000269" key="2">
    <source>
    </source>
</evidence>
<evidence type="ECO:0000305" key="3"/>
<evidence type="ECO:0007829" key="4">
    <source>
        <dbReference type="PDB" id="1F0Z"/>
    </source>
</evidence>
<evidence type="ECO:0007829" key="5">
    <source>
        <dbReference type="PDB" id="1ZUD"/>
    </source>
</evidence>
<comment type="function">
    <text evidence="2">Is the sulfur donor in the synthesis of the thiazole phosphate moiety of thiamine phosphate.</text>
</comment>
<comment type="pathway">
    <text>Cofactor biosynthesis; thiamine diphosphate biosynthesis.</text>
</comment>
<comment type="PTM">
    <text evidence="2">C-terminal thiocarboxylation occurs in 2 steps, it is first acyl-adenylated (-COAMP) by ThiF, then thiocarboxylated (-COSH) by ThiI.</text>
</comment>
<comment type="mass spectrometry"/>
<comment type="mass spectrometry"/>
<comment type="similarity">
    <text evidence="3">Belongs to the sulfur carrier protein ThiS family.</text>
</comment>
<sequence>MQILFNDQAMQCAAGQTVHELLEQLDQRQAGAALAINQQIVPREQWAQHIVQDGDQILLFQVIAGG</sequence>
<organism>
    <name type="scientific">Escherichia coli (strain K12)</name>
    <dbReference type="NCBI Taxonomy" id="83333"/>
    <lineage>
        <taxon>Bacteria</taxon>
        <taxon>Pseudomonadati</taxon>
        <taxon>Pseudomonadota</taxon>
        <taxon>Gammaproteobacteria</taxon>
        <taxon>Enterobacterales</taxon>
        <taxon>Enterobacteriaceae</taxon>
        <taxon>Escherichia</taxon>
    </lineage>
</organism>
<accession>O32583</accession>
<accession>Q2M8S8</accession>
<gene>
    <name type="primary">thiS</name>
    <name type="synonym">thiG1</name>
    <name type="ordered locus">b4407</name>
    <name type="ordered locus">JW3955</name>
</gene>
<protein>
    <recommendedName>
        <fullName>Sulfur carrier protein ThiS</fullName>
    </recommendedName>
    <alternativeName>
        <fullName>Thiamine biosynthesis protein ThiS</fullName>
    </alternativeName>
</protein>
<proteinExistence type="evidence at protein level"/>
<reference key="1">
    <citation type="journal article" date="1993" name="J. Bacteriol.">
        <title>Structural genes for thiamine biosynthetic enzymes (thiCEFGH) in Escherichia coli K-12.</title>
        <authorList>
            <person name="Vander Horn P.B."/>
            <person name="Backstrom A.D."/>
            <person name="Stewart V."/>
            <person name="Begley T.P."/>
        </authorList>
    </citation>
    <scope>NUCLEOTIDE SEQUENCE [GENOMIC DNA]</scope>
    <source>
        <strain>K12</strain>
    </source>
</reference>
<reference key="2">
    <citation type="journal article" date="1993" name="Nucleic Acids Res.">
        <title>Analysis of the Escherichia coli genome. IV. DNA sequence of the region from 89.2 to 92.8 minutes.</title>
        <authorList>
            <person name="Blattner F.R."/>
            <person name="Burland V.D."/>
            <person name="Plunkett G. III"/>
            <person name="Sofia H.J."/>
            <person name="Daniels D.L."/>
        </authorList>
    </citation>
    <scope>NUCLEOTIDE SEQUENCE [LARGE SCALE GENOMIC DNA]</scope>
    <source>
        <strain>K12 / MG1655 / ATCC 47076</strain>
    </source>
</reference>
<reference key="3">
    <citation type="journal article" date="1997" name="Science">
        <title>The complete genome sequence of Escherichia coli K-12.</title>
        <authorList>
            <person name="Blattner F.R."/>
            <person name="Plunkett G. III"/>
            <person name="Bloch C.A."/>
            <person name="Perna N.T."/>
            <person name="Burland V."/>
            <person name="Riley M."/>
            <person name="Collado-Vides J."/>
            <person name="Glasner J.D."/>
            <person name="Rode C.K."/>
            <person name="Mayhew G.F."/>
            <person name="Gregor J."/>
            <person name="Davis N.W."/>
            <person name="Kirkpatrick H.A."/>
            <person name="Goeden M.A."/>
            <person name="Rose D.J."/>
            <person name="Mau B."/>
            <person name="Shao Y."/>
        </authorList>
    </citation>
    <scope>NUCLEOTIDE SEQUENCE [LARGE SCALE GENOMIC DNA]</scope>
    <source>
        <strain>K12 / MG1655 / ATCC 47076</strain>
    </source>
</reference>
<reference key="4">
    <citation type="journal article" date="2006" name="Mol. Syst. Biol.">
        <title>Highly accurate genome sequences of Escherichia coli K-12 strains MG1655 and W3110.</title>
        <authorList>
            <person name="Hayashi K."/>
            <person name="Morooka N."/>
            <person name="Yamamoto Y."/>
            <person name="Fujita K."/>
            <person name="Isono K."/>
            <person name="Choi S."/>
            <person name="Ohtsubo E."/>
            <person name="Baba T."/>
            <person name="Wanner B.L."/>
            <person name="Mori H."/>
            <person name="Horiuchi T."/>
        </authorList>
    </citation>
    <scope>NUCLEOTIDE SEQUENCE [LARGE SCALE GENOMIC DNA]</scope>
    <source>
        <strain>K12 / W3110 / ATCC 27325 / DSM 5911</strain>
    </source>
</reference>
<reference key="5">
    <citation type="journal article" date="1998" name="J. Biol. Chem.">
        <title>Thiamin biosynthesis in Escherichia coli. Identification of ThiS thiocarboxylate as the immediate sulfur donor in the thiazole formation.</title>
        <authorList>
            <person name="Taylor S.V."/>
            <person name="Kelleher N.L."/>
            <person name="Kinsland C."/>
            <person name="Chiu H.-J."/>
            <person name="Costello C.A."/>
            <person name="Backstrom A.D."/>
            <person name="McLafferty F.W."/>
            <person name="Begley T.P."/>
        </authorList>
    </citation>
    <scope>FUNCTION</scope>
    <scope>AMPYLATION AT GLY-66</scope>
    <scope>THIOCARBOXYLATION AT GLY-66</scope>
    <scope>INTERACTION WITH THIF</scope>
    <scope>MASS SPECTROMETRY</scope>
    <source>
        <strain>B/r / ATCC 12407</strain>
    </source>
</reference>
<reference key="6">
    <citation type="journal article" date="1998" name="Protein Sci.">
        <title>Efficient sequence analysis of the six gene products (7-74 kDa) from the Escherichia coli thiamin biosynthetic operon by tandem high-resolution mass spectrometry.</title>
        <authorList>
            <person name="Kelleher N.L."/>
            <person name="Taylor S.V."/>
            <person name="Grannis D."/>
            <person name="Kinsland C."/>
            <person name="Chiu H.-J."/>
            <person name="Begley T.P."/>
            <person name="McLafferty F.W."/>
        </authorList>
    </citation>
    <scope>MASS SPECTROMETRY</scope>
</reference>
<reference key="7">
    <citation type="journal article" date="2001" name="Proc. Natl. Acad. Sci. U.S.A.">
        <title>Biosynthesis of the thiazole moiety of thiamin in Escherichia coli: identification of an acyldisulfide-linked protein--protein conjugate that is functionally analogous to the ubiquitin/E1 complex.</title>
        <authorList>
            <person name="Xi J."/>
            <person name="Ge Y."/>
            <person name="Kinsland C."/>
            <person name="McLafferty F.W."/>
            <person name="Begley T.P."/>
        </authorList>
    </citation>
    <scope>CROSS-LINKING TO THIF</scope>
    <scope>REACTION MECHANISM</scope>
    <source>
        <strain>K12</strain>
    </source>
</reference>
<reference key="8">
    <citation type="journal article" date="2001" name="Nat. Struct. Biol.">
        <title>Solution structure of ThiS and implications for the evolutionary roots of ubiquitin.</title>
        <authorList>
            <person name="Wang C."/>
            <person name="Xi J."/>
            <person name="Begley T.P."/>
            <person name="Nicholson L.K."/>
        </authorList>
    </citation>
    <scope>STRUCTURE BY NMR</scope>
</reference>
<reference key="9">
    <citation type="journal article" date="2006" name="Biochemistry">
        <title>Structure of the Escherichia coli ThiS-ThiF complex, a key component of the sulfur transfer system in thiamin biosynthesis.</title>
        <authorList>
            <person name="Lehmann C."/>
            <person name="Begley T.P."/>
            <person name="Ealick S.E."/>
        </authorList>
    </citation>
    <scope>X-RAY CRYSTALLOGRAPHY (1.98 ANGSTROMS) IN COMPLEX WITH THIF</scope>
    <scope>REACTION MECHANISM</scope>
</reference>
<dbReference type="EMBL" id="M88701">
    <property type="protein sequence ID" value="AAB95620.1"/>
    <property type="molecule type" value="Genomic_DNA"/>
</dbReference>
<dbReference type="EMBL" id="U00006">
    <property type="status" value="NOT_ANNOTATED_CDS"/>
    <property type="molecule type" value="Genomic_DNA"/>
</dbReference>
<dbReference type="EMBL" id="U00096">
    <property type="protein sequence ID" value="AAT48237.1"/>
    <property type="molecule type" value="Genomic_DNA"/>
</dbReference>
<dbReference type="EMBL" id="AP009048">
    <property type="protein sequence ID" value="BAE77328.1"/>
    <property type="molecule type" value="Genomic_DNA"/>
</dbReference>
<dbReference type="PIR" id="S77700">
    <property type="entry name" value="S77700"/>
</dbReference>
<dbReference type="RefSeq" id="WP_001166226.1">
    <property type="nucleotide sequence ID" value="NZ_SSZK01000047.1"/>
</dbReference>
<dbReference type="RefSeq" id="YP_026279.1">
    <property type="nucleotide sequence ID" value="NC_000913.3"/>
</dbReference>
<dbReference type="PDB" id="1F0Z">
    <property type="method" value="NMR"/>
    <property type="chains" value="A=1-66"/>
</dbReference>
<dbReference type="PDB" id="1ZUD">
    <property type="method" value="X-ray"/>
    <property type="resolution" value="1.98 A"/>
    <property type="chains" value="2/4=1-66"/>
</dbReference>
<dbReference type="PDBsum" id="1F0Z"/>
<dbReference type="PDBsum" id="1ZUD"/>
<dbReference type="BMRB" id="O32583"/>
<dbReference type="SMR" id="O32583"/>
<dbReference type="BioGRID" id="4261404">
    <property type="interactions" value="9"/>
</dbReference>
<dbReference type="ComplexPortal" id="CPX-2134">
    <property type="entry name" value="ThiF-ThiS complex"/>
</dbReference>
<dbReference type="FunCoup" id="O32583">
    <property type="interactions" value="28"/>
</dbReference>
<dbReference type="IntAct" id="O32583">
    <property type="interactions" value="1"/>
</dbReference>
<dbReference type="STRING" id="511145.b4407"/>
<dbReference type="PaxDb" id="511145-b4407"/>
<dbReference type="EnsemblBacteria" id="AAT48237">
    <property type="protein sequence ID" value="AAT48237"/>
    <property type="gene ID" value="b4407"/>
</dbReference>
<dbReference type="GeneID" id="2847702"/>
<dbReference type="KEGG" id="ecj:JW3955"/>
<dbReference type="KEGG" id="eco:b4407"/>
<dbReference type="KEGG" id="ecoc:C3026_21560"/>
<dbReference type="PATRIC" id="fig|1411691.4.peg.2720"/>
<dbReference type="EchoBASE" id="EB4108"/>
<dbReference type="eggNOG" id="COG2104">
    <property type="taxonomic scope" value="Bacteria"/>
</dbReference>
<dbReference type="HOGENOM" id="CLU_174611_2_1_6"/>
<dbReference type="InParanoid" id="O32583"/>
<dbReference type="OMA" id="EMGCVFA"/>
<dbReference type="OrthoDB" id="6388078at2"/>
<dbReference type="PhylomeDB" id="O32583"/>
<dbReference type="BioCyc" id="EcoCyc:THIS-MONOMER"/>
<dbReference type="BioCyc" id="MetaCyc:THIS-MONOMER"/>
<dbReference type="UniPathway" id="UPA00060"/>
<dbReference type="EvolutionaryTrace" id="O32583"/>
<dbReference type="PRO" id="PR:O32583"/>
<dbReference type="Proteomes" id="UP000000625">
    <property type="component" value="Chromosome"/>
</dbReference>
<dbReference type="GO" id="GO:1902503">
    <property type="term" value="C:adenylyltransferase complex"/>
    <property type="evidence" value="ECO:0000353"/>
    <property type="project" value="ComplexPortal"/>
</dbReference>
<dbReference type="GO" id="GO:1990228">
    <property type="term" value="C:sulfurtransferase complex"/>
    <property type="evidence" value="ECO:0000303"/>
    <property type="project" value="ComplexPortal"/>
</dbReference>
<dbReference type="GO" id="GO:0000166">
    <property type="term" value="F:nucleotide binding"/>
    <property type="evidence" value="ECO:0007669"/>
    <property type="project" value="UniProtKB-KW"/>
</dbReference>
<dbReference type="GO" id="GO:0097163">
    <property type="term" value="F:sulfur carrier activity"/>
    <property type="evidence" value="ECO:0000314"/>
    <property type="project" value="EcoCyc"/>
</dbReference>
<dbReference type="GO" id="GO:0009228">
    <property type="term" value="P:thiamine biosynthetic process"/>
    <property type="evidence" value="ECO:0007669"/>
    <property type="project" value="UniProtKB-KW"/>
</dbReference>
<dbReference type="GO" id="GO:0009229">
    <property type="term" value="P:thiamine diphosphate biosynthetic process"/>
    <property type="evidence" value="ECO:0007669"/>
    <property type="project" value="UniProtKB-UniPathway"/>
</dbReference>
<dbReference type="GO" id="GO:0052837">
    <property type="term" value="P:thiazole biosynthetic process"/>
    <property type="evidence" value="ECO:0000314"/>
    <property type="project" value="EcoCyc"/>
</dbReference>
<dbReference type="CDD" id="cd00565">
    <property type="entry name" value="Ubl_ThiS"/>
    <property type="match status" value="1"/>
</dbReference>
<dbReference type="Gene3D" id="3.10.20.30">
    <property type="match status" value="1"/>
</dbReference>
<dbReference type="InterPro" id="IPR012675">
    <property type="entry name" value="Beta-grasp_dom_sf"/>
</dbReference>
<dbReference type="InterPro" id="IPR016155">
    <property type="entry name" value="Mopterin_synth/thiamin_S_b"/>
</dbReference>
<dbReference type="InterPro" id="IPR010035">
    <property type="entry name" value="Thi_S"/>
</dbReference>
<dbReference type="InterPro" id="IPR003749">
    <property type="entry name" value="ThiS/MoaD-like"/>
</dbReference>
<dbReference type="NCBIfam" id="TIGR01683">
    <property type="entry name" value="thiS"/>
    <property type="match status" value="1"/>
</dbReference>
<dbReference type="PANTHER" id="PTHR34472">
    <property type="entry name" value="SULFUR CARRIER PROTEIN THIS"/>
    <property type="match status" value="1"/>
</dbReference>
<dbReference type="PANTHER" id="PTHR34472:SF1">
    <property type="entry name" value="SULFUR CARRIER PROTEIN THIS"/>
    <property type="match status" value="1"/>
</dbReference>
<dbReference type="Pfam" id="PF02597">
    <property type="entry name" value="ThiS"/>
    <property type="match status" value="1"/>
</dbReference>
<dbReference type="SUPFAM" id="SSF54285">
    <property type="entry name" value="MoaD/ThiS"/>
    <property type="match status" value="1"/>
</dbReference>